<evidence type="ECO:0000250" key="1"/>
<evidence type="ECO:0000250" key="2">
    <source>
        <dbReference type="UniProtKB" id="O75204"/>
    </source>
</evidence>
<evidence type="ECO:0000255" key="3"/>
<evidence type="ECO:0000256" key="4">
    <source>
        <dbReference type="SAM" id="MobiDB-lite"/>
    </source>
</evidence>
<evidence type="ECO:0000305" key="5"/>
<proteinExistence type="evidence at transcript level"/>
<protein>
    <recommendedName>
        <fullName>Transmembrane protein 127</fullName>
    </recommendedName>
</protein>
<dbReference type="EMBL" id="AK030324">
    <property type="protein sequence ID" value="BAC26902.1"/>
    <property type="molecule type" value="mRNA"/>
</dbReference>
<dbReference type="EMBL" id="AK050216">
    <property type="protein sequence ID" value="BAC34129.1"/>
    <property type="molecule type" value="mRNA"/>
</dbReference>
<dbReference type="EMBL" id="AK165880">
    <property type="protein sequence ID" value="BAE38434.1"/>
    <property type="molecule type" value="mRNA"/>
</dbReference>
<dbReference type="EMBL" id="AL845368">
    <property type="status" value="NOT_ANNOTATED_CDS"/>
    <property type="molecule type" value="Genomic_DNA"/>
</dbReference>
<dbReference type="EMBL" id="BC049832">
    <property type="protein sequence ID" value="AAH49832.1"/>
    <property type="molecule type" value="mRNA"/>
</dbReference>
<dbReference type="CCDS" id="CCDS16697.1"/>
<dbReference type="RefSeq" id="NP_780354.1">
    <property type="nucleotide sequence ID" value="NM_175145.4"/>
</dbReference>
<dbReference type="FunCoup" id="Q8BGP5">
    <property type="interactions" value="2390"/>
</dbReference>
<dbReference type="STRING" id="10090.ENSMUSP00000035434"/>
<dbReference type="iPTMnet" id="Q8BGP5"/>
<dbReference type="PhosphoSitePlus" id="Q8BGP5"/>
<dbReference type="PaxDb" id="10090-ENSMUSP00000035434"/>
<dbReference type="ProteomicsDB" id="259525"/>
<dbReference type="Pumba" id="Q8BGP5"/>
<dbReference type="Antibodypedia" id="32415">
    <property type="antibodies" value="40 antibodies from 17 providers"/>
</dbReference>
<dbReference type="DNASU" id="69470"/>
<dbReference type="Ensembl" id="ENSMUST00000035871.15">
    <property type="protein sequence ID" value="ENSMUSP00000035434.9"/>
    <property type="gene ID" value="ENSMUSG00000034850.16"/>
</dbReference>
<dbReference type="GeneID" id="69470"/>
<dbReference type="KEGG" id="mmu:69470"/>
<dbReference type="UCSC" id="uc008mfc.1">
    <property type="organism name" value="mouse"/>
</dbReference>
<dbReference type="AGR" id="MGI:1916720"/>
<dbReference type="CTD" id="55654"/>
<dbReference type="MGI" id="MGI:1916720">
    <property type="gene designation" value="Tmem127"/>
</dbReference>
<dbReference type="VEuPathDB" id="HostDB:ENSMUSG00000034850"/>
<dbReference type="eggNOG" id="ENOG502QTCN">
    <property type="taxonomic scope" value="Eukaryota"/>
</dbReference>
<dbReference type="GeneTree" id="ENSGT00390000005154"/>
<dbReference type="InParanoid" id="Q8BGP5"/>
<dbReference type="OMA" id="CVFWVIA"/>
<dbReference type="OrthoDB" id="10030622at2759"/>
<dbReference type="PhylomeDB" id="Q8BGP5"/>
<dbReference type="TreeFam" id="TF328671"/>
<dbReference type="BioGRID-ORCS" id="69470">
    <property type="hits" value="15 hits in 82 CRISPR screens"/>
</dbReference>
<dbReference type="ChiTaRS" id="Tmem127">
    <property type="organism name" value="mouse"/>
</dbReference>
<dbReference type="PRO" id="PR:Q8BGP5"/>
<dbReference type="Proteomes" id="UP000000589">
    <property type="component" value="Chromosome 2"/>
</dbReference>
<dbReference type="RNAct" id="Q8BGP5">
    <property type="molecule type" value="protein"/>
</dbReference>
<dbReference type="Bgee" id="ENSMUSG00000034850">
    <property type="expression patterns" value="Expressed in otolith organ and 225 other cell types or tissues"/>
</dbReference>
<dbReference type="ExpressionAtlas" id="Q8BGP5">
    <property type="expression patterns" value="baseline and differential"/>
</dbReference>
<dbReference type="GO" id="GO:0005769">
    <property type="term" value="C:early endosome"/>
    <property type="evidence" value="ECO:0000266"/>
    <property type="project" value="MGI"/>
</dbReference>
<dbReference type="GO" id="GO:0005886">
    <property type="term" value="C:plasma membrane"/>
    <property type="evidence" value="ECO:0007669"/>
    <property type="project" value="UniProtKB-SubCell"/>
</dbReference>
<dbReference type="GO" id="GO:0031267">
    <property type="term" value="F:small GTPase binding"/>
    <property type="evidence" value="ECO:0000266"/>
    <property type="project" value="MGI"/>
</dbReference>
<dbReference type="GO" id="GO:0007032">
    <property type="term" value="P:endosome organization"/>
    <property type="evidence" value="ECO:0000315"/>
    <property type="project" value="MGI"/>
</dbReference>
<dbReference type="GO" id="GO:0008285">
    <property type="term" value="P:negative regulation of cell population proliferation"/>
    <property type="evidence" value="ECO:0007669"/>
    <property type="project" value="Ensembl"/>
</dbReference>
<dbReference type="GO" id="GO:0032007">
    <property type="term" value="P:negative regulation of TOR signaling"/>
    <property type="evidence" value="ECO:0007669"/>
    <property type="project" value="Ensembl"/>
</dbReference>
<dbReference type="GO" id="GO:0032006">
    <property type="term" value="P:regulation of TOR signaling"/>
    <property type="evidence" value="ECO:0000315"/>
    <property type="project" value="MGI"/>
</dbReference>
<dbReference type="InterPro" id="IPR033331">
    <property type="entry name" value="TMEM127"/>
</dbReference>
<dbReference type="InterPro" id="IPR046795">
    <property type="entry name" value="TMEM127_TM"/>
</dbReference>
<dbReference type="PANTHER" id="PTHR28358">
    <property type="entry name" value="TRANSMEMBRANE PROTEIN 127"/>
    <property type="match status" value="1"/>
</dbReference>
<dbReference type="PANTHER" id="PTHR28358:SF1">
    <property type="entry name" value="TRANSMEMBRANE PROTEIN 127"/>
    <property type="match status" value="1"/>
</dbReference>
<dbReference type="Pfam" id="PF20517">
    <property type="entry name" value="TMEM127"/>
    <property type="match status" value="1"/>
</dbReference>
<gene>
    <name type="primary">Tmem127</name>
</gene>
<sequence>MYAPGGAGLPGGRRRRSPGSSALPKQPERSLASALPGALSITALCTALAEPAWLHIHGGTCSRQELGVSDVLGYVNPDLLKDFCMNPQTVLLLRVIAAFCFLGILCSLSAFLLDVFGPKHPALKITRRYAFAHILTVLQCATVIGFSYWASELILAQQQQHKKYHGSQVYVTFAVSFYLVAGAGGASILATAANLLRHYPTEEEEQALELLSEMEENDPYPAEYEVINQFQPPPAYTP</sequence>
<comment type="function">
    <text evidence="1">Controls cell proliferation acting as a negative regulator of TOR signaling pathway mediated by mTORC1. May act as a tumor suppressor.</text>
</comment>
<comment type="subcellular location">
    <subcellularLocation>
        <location evidence="1">Cell membrane</location>
        <topology evidence="1">Multi-pass membrane protein</topology>
    </subcellularLocation>
    <subcellularLocation>
        <location evidence="1">Cytoplasm</location>
    </subcellularLocation>
    <text evidence="1">Association of TMEM127 with the cell membrane is enhanced by inhibition of endocytosis. In the cytoplasm, it colocalizes with markers of early endosomal structures, Golgi apparatus and lysosomes.</text>
</comment>
<comment type="similarity">
    <text evidence="5">Belongs to the TMEM127 family.</text>
</comment>
<organism>
    <name type="scientific">Mus musculus</name>
    <name type="common">Mouse</name>
    <dbReference type="NCBI Taxonomy" id="10090"/>
    <lineage>
        <taxon>Eukaryota</taxon>
        <taxon>Metazoa</taxon>
        <taxon>Chordata</taxon>
        <taxon>Craniata</taxon>
        <taxon>Vertebrata</taxon>
        <taxon>Euteleostomi</taxon>
        <taxon>Mammalia</taxon>
        <taxon>Eutheria</taxon>
        <taxon>Euarchontoglires</taxon>
        <taxon>Glires</taxon>
        <taxon>Rodentia</taxon>
        <taxon>Myomorpha</taxon>
        <taxon>Muroidea</taxon>
        <taxon>Muridae</taxon>
        <taxon>Murinae</taxon>
        <taxon>Mus</taxon>
        <taxon>Mus</taxon>
    </lineage>
</organism>
<keyword id="KW-0007">Acetylation</keyword>
<keyword id="KW-1003">Cell membrane</keyword>
<keyword id="KW-0963">Cytoplasm</keyword>
<keyword id="KW-0472">Membrane</keyword>
<keyword id="KW-0597">Phosphoprotein</keyword>
<keyword id="KW-1185">Reference proteome</keyword>
<keyword id="KW-0812">Transmembrane</keyword>
<keyword id="KW-1133">Transmembrane helix</keyword>
<keyword id="KW-0043">Tumor suppressor</keyword>
<accession>Q8BGP5</accession>
<accession>A2ARF9</accession>
<accession>Q3TMK7</accession>
<reference key="1">
    <citation type="journal article" date="2005" name="Science">
        <title>The transcriptional landscape of the mammalian genome.</title>
        <authorList>
            <person name="Carninci P."/>
            <person name="Kasukawa T."/>
            <person name="Katayama S."/>
            <person name="Gough J."/>
            <person name="Frith M.C."/>
            <person name="Maeda N."/>
            <person name="Oyama R."/>
            <person name="Ravasi T."/>
            <person name="Lenhard B."/>
            <person name="Wells C."/>
            <person name="Kodzius R."/>
            <person name="Shimokawa K."/>
            <person name="Bajic V.B."/>
            <person name="Brenner S.E."/>
            <person name="Batalov S."/>
            <person name="Forrest A.R."/>
            <person name="Zavolan M."/>
            <person name="Davis M.J."/>
            <person name="Wilming L.G."/>
            <person name="Aidinis V."/>
            <person name="Allen J.E."/>
            <person name="Ambesi-Impiombato A."/>
            <person name="Apweiler R."/>
            <person name="Aturaliya R.N."/>
            <person name="Bailey T.L."/>
            <person name="Bansal M."/>
            <person name="Baxter L."/>
            <person name="Beisel K.W."/>
            <person name="Bersano T."/>
            <person name="Bono H."/>
            <person name="Chalk A.M."/>
            <person name="Chiu K.P."/>
            <person name="Choudhary V."/>
            <person name="Christoffels A."/>
            <person name="Clutterbuck D.R."/>
            <person name="Crowe M.L."/>
            <person name="Dalla E."/>
            <person name="Dalrymple B.P."/>
            <person name="de Bono B."/>
            <person name="Della Gatta G."/>
            <person name="di Bernardo D."/>
            <person name="Down T."/>
            <person name="Engstrom P."/>
            <person name="Fagiolini M."/>
            <person name="Faulkner G."/>
            <person name="Fletcher C.F."/>
            <person name="Fukushima T."/>
            <person name="Furuno M."/>
            <person name="Futaki S."/>
            <person name="Gariboldi M."/>
            <person name="Georgii-Hemming P."/>
            <person name="Gingeras T.R."/>
            <person name="Gojobori T."/>
            <person name="Green R.E."/>
            <person name="Gustincich S."/>
            <person name="Harbers M."/>
            <person name="Hayashi Y."/>
            <person name="Hensch T.K."/>
            <person name="Hirokawa N."/>
            <person name="Hill D."/>
            <person name="Huminiecki L."/>
            <person name="Iacono M."/>
            <person name="Ikeo K."/>
            <person name="Iwama A."/>
            <person name="Ishikawa T."/>
            <person name="Jakt M."/>
            <person name="Kanapin A."/>
            <person name="Katoh M."/>
            <person name="Kawasawa Y."/>
            <person name="Kelso J."/>
            <person name="Kitamura H."/>
            <person name="Kitano H."/>
            <person name="Kollias G."/>
            <person name="Krishnan S.P."/>
            <person name="Kruger A."/>
            <person name="Kummerfeld S.K."/>
            <person name="Kurochkin I.V."/>
            <person name="Lareau L.F."/>
            <person name="Lazarevic D."/>
            <person name="Lipovich L."/>
            <person name="Liu J."/>
            <person name="Liuni S."/>
            <person name="McWilliam S."/>
            <person name="Madan Babu M."/>
            <person name="Madera M."/>
            <person name="Marchionni L."/>
            <person name="Matsuda H."/>
            <person name="Matsuzawa S."/>
            <person name="Miki H."/>
            <person name="Mignone F."/>
            <person name="Miyake S."/>
            <person name="Morris K."/>
            <person name="Mottagui-Tabar S."/>
            <person name="Mulder N."/>
            <person name="Nakano N."/>
            <person name="Nakauchi H."/>
            <person name="Ng P."/>
            <person name="Nilsson R."/>
            <person name="Nishiguchi S."/>
            <person name="Nishikawa S."/>
            <person name="Nori F."/>
            <person name="Ohara O."/>
            <person name="Okazaki Y."/>
            <person name="Orlando V."/>
            <person name="Pang K.C."/>
            <person name="Pavan W.J."/>
            <person name="Pavesi G."/>
            <person name="Pesole G."/>
            <person name="Petrovsky N."/>
            <person name="Piazza S."/>
            <person name="Reed J."/>
            <person name="Reid J.F."/>
            <person name="Ring B.Z."/>
            <person name="Ringwald M."/>
            <person name="Rost B."/>
            <person name="Ruan Y."/>
            <person name="Salzberg S.L."/>
            <person name="Sandelin A."/>
            <person name="Schneider C."/>
            <person name="Schoenbach C."/>
            <person name="Sekiguchi K."/>
            <person name="Semple C.A."/>
            <person name="Seno S."/>
            <person name="Sessa L."/>
            <person name="Sheng Y."/>
            <person name="Shibata Y."/>
            <person name="Shimada H."/>
            <person name="Shimada K."/>
            <person name="Silva D."/>
            <person name="Sinclair B."/>
            <person name="Sperling S."/>
            <person name="Stupka E."/>
            <person name="Sugiura K."/>
            <person name="Sultana R."/>
            <person name="Takenaka Y."/>
            <person name="Taki K."/>
            <person name="Tammoja K."/>
            <person name="Tan S.L."/>
            <person name="Tang S."/>
            <person name="Taylor M.S."/>
            <person name="Tegner J."/>
            <person name="Teichmann S.A."/>
            <person name="Ueda H.R."/>
            <person name="van Nimwegen E."/>
            <person name="Verardo R."/>
            <person name="Wei C.L."/>
            <person name="Yagi K."/>
            <person name="Yamanishi H."/>
            <person name="Zabarovsky E."/>
            <person name="Zhu S."/>
            <person name="Zimmer A."/>
            <person name="Hide W."/>
            <person name="Bult C."/>
            <person name="Grimmond S.M."/>
            <person name="Teasdale R.D."/>
            <person name="Liu E.T."/>
            <person name="Brusic V."/>
            <person name="Quackenbush J."/>
            <person name="Wahlestedt C."/>
            <person name="Mattick J.S."/>
            <person name="Hume D.A."/>
            <person name="Kai C."/>
            <person name="Sasaki D."/>
            <person name="Tomaru Y."/>
            <person name="Fukuda S."/>
            <person name="Kanamori-Katayama M."/>
            <person name="Suzuki M."/>
            <person name="Aoki J."/>
            <person name="Arakawa T."/>
            <person name="Iida J."/>
            <person name="Imamura K."/>
            <person name="Itoh M."/>
            <person name="Kato T."/>
            <person name="Kawaji H."/>
            <person name="Kawagashira N."/>
            <person name="Kawashima T."/>
            <person name="Kojima M."/>
            <person name="Kondo S."/>
            <person name="Konno H."/>
            <person name="Nakano K."/>
            <person name="Ninomiya N."/>
            <person name="Nishio T."/>
            <person name="Okada M."/>
            <person name="Plessy C."/>
            <person name="Shibata K."/>
            <person name="Shiraki T."/>
            <person name="Suzuki S."/>
            <person name="Tagami M."/>
            <person name="Waki K."/>
            <person name="Watahiki A."/>
            <person name="Okamura-Oho Y."/>
            <person name="Suzuki H."/>
            <person name="Kawai J."/>
            <person name="Hayashizaki Y."/>
        </authorList>
    </citation>
    <scope>NUCLEOTIDE SEQUENCE [LARGE SCALE MRNA]</scope>
    <source>
        <strain>C57BL/6J</strain>
        <tissue>Liver</tissue>
        <tissue>Lung</tissue>
        <tissue>Ovary</tissue>
        <tissue>Uterus</tissue>
    </source>
</reference>
<reference key="2">
    <citation type="journal article" date="2009" name="PLoS Biol.">
        <title>Lineage-specific biology revealed by a finished genome assembly of the mouse.</title>
        <authorList>
            <person name="Church D.M."/>
            <person name="Goodstadt L."/>
            <person name="Hillier L.W."/>
            <person name="Zody M.C."/>
            <person name="Goldstein S."/>
            <person name="She X."/>
            <person name="Bult C.J."/>
            <person name="Agarwala R."/>
            <person name="Cherry J.L."/>
            <person name="DiCuccio M."/>
            <person name="Hlavina W."/>
            <person name="Kapustin Y."/>
            <person name="Meric P."/>
            <person name="Maglott D."/>
            <person name="Birtle Z."/>
            <person name="Marques A.C."/>
            <person name="Graves T."/>
            <person name="Zhou S."/>
            <person name="Teague B."/>
            <person name="Potamousis K."/>
            <person name="Churas C."/>
            <person name="Place M."/>
            <person name="Herschleb J."/>
            <person name="Runnheim R."/>
            <person name="Forrest D."/>
            <person name="Amos-Landgraf J."/>
            <person name="Schwartz D.C."/>
            <person name="Cheng Z."/>
            <person name="Lindblad-Toh K."/>
            <person name="Eichler E.E."/>
            <person name="Ponting C.P."/>
        </authorList>
    </citation>
    <scope>NUCLEOTIDE SEQUENCE [LARGE SCALE GENOMIC DNA]</scope>
    <source>
        <strain>C57BL/6J</strain>
    </source>
</reference>
<reference key="3">
    <citation type="journal article" date="2004" name="Genome Res.">
        <title>The status, quality, and expansion of the NIH full-length cDNA project: the Mammalian Gene Collection (MGC).</title>
        <authorList>
            <consortium name="The MGC Project Team"/>
        </authorList>
    </citation>
    <scope>NUCLEOTIDE SEQUENCE [LARGE SCALE MRNA]</scope>
    <source>
        <tissue>Olfactory epithelium</tissue>
    </source>
</reference>
<name>TM127_MOUSE</name>
<feature type="chain" id="PRO_0000251719" description="Transmembrane protein 127">
    <location>
        <begin position="1"/>
        <end position="238"/>
    </location>
</feature>
<feature type="transmembrane region" description="Helical" evidence="3">
    <location>
        <begin position="96"/>
        <end position="116"/>
    </location>
</feature>
<feature type="transmembrane region" description="Helical" evidence="3">
    <location>
        <begin position="130"/>
        <end position="150"/>
    </location>
</feature>
<feature type="transmembrane region" description="Helical" evidence="3">
    <location>
        <begin position="169"/>
        <end position="189"/>
    </location>
</feature>
<feature type="region of interest" description="Disordered" evidence="4">
    <location>
        <begin position="1"/>
        <end position="27"/>
    </location>
</feature>
<feature type="compositionally biased region" description="Gly residues" evidence="4">
    <location>
        <begin position="1"/>
        <end position="11"/>
    </location>
</feature>
<feature type="modified residue" description="N-acetylmethionine" evidence="2">
    <location>
        <position position="1"/>
    </location>
</feature>
<feature type="modified residue" description="Phosphoserine" evidence="2">
    <location>
        <position position="17"/>
    </location>
</feature>